<name>BAR3_SCHCM</name>
<dbReference type="EMBL" id="AY372275">
    <property type="protein sequence ID" value="AAR99648.1"/>
    <property type="molecule type" value="Genomic_DNA"/>
</dbReference>
<dbReference type="EMBL" id="U76688">
    <property type="protein sequence ID" value="AAB61998.1"/>
    <property type="molecule type" value="Genomic_DNA"/>
</dbReference>
<dbReference type="EMBL" id="GL377311">
    <property type="protein sequence ID" value="EFI93067.1"/>
    <property type="molecule type" value="Genomic_DNA"/>
</dbReference>
<dbReference type="RefSeq" id="XP_003027970.1">
    <property type="nucleotide sequence ID" value="XM_003027924.1"/>
</dbReference>
<dbReference type="STRING" id="578458.P56502"/>
<dbReference type="GeneID" id="9592022"/>
<dbReference type="KEGG" id="scm:SCHCO_01034973"/>
<dbReference type="VEuPathDB" id="FungiDB:SCHCODRAFT_01034973"/>
<dbReference type="eggNOG" id="ENOG502S44N">
    <property type="taxonomic scope" value="Eukaryota"/>
</dbReference>
<dbReference type="HOGENOM" id="CLU_027592_0_2_1"/>
<dbReference type="InParanoid" id="P56502"/>
<dbReference type="OMA" id="YNGCAGI"/>
<dbReference type="OrthoDB" id="2874149at2759"/>
<dbReference type="Proteomes" id="UP000007431">
    <property type="component" value="Unassembled WGS sequence"/>
</dbReference>
<dbReference type="GO" id="GO:0005886">
    <property type="term" value="C:plasma membrane"/>
    <property type="evidence" value="ECO:0007669"/>
    <property type="project" value="TreeGrafter"/>
</dbReference>
<dbReference type="GO" id="GO:0004934">
    <property type="term" value="F:mating-type alpha-factor pheromone receptor activity"/>
    <property type="evidence" value="ECO:0007669"/>
    <property type="project" value="InterPro"/>
</dbReference>
<dbReference type="GO" id="GO:0000750">
    <property type="term" value="P:pheromone-dependent signal transduction involved in conjugation with cellular fusion"/>
    <property type="evidence" value="ECO:0007669"/>
    <property type="project" value="TreeGrafter"/>
</dbReference>
<dbReference type="CDD" id="cd14966">
    <property type="entry name" value="7tmD_STE3"/>
    <property type="match status" value="1"/>
</dbReference>
<dbReference type="InterPro" id="IPR000481">
    <property type="entry name" value="GPCR_Pheromne_B_alpha_rcpt"/>
</dbReference>
<dbReference type="InterPro" id="IPR001499">
    <property type="entry name" value="GPCR_STE3"/>
</dbReference>
<dbReference type="PANTHER" id="PTHR28097">
    <property type="entry name" value="PHEROMONE A FACTOR RECEPTOR"/>
    <property type="match status" value="1"/>
</dbReference>
<dbReference type="PANTHER" id="PTHR28097:SF1">
    <property type="entry name" value="PHEROMONE A FACTOR RECEPTOR"/>
    <property type="match status" value="1"/>
</dbReference>
<dbReference type="Pfam" id="PF02076">
    <property type="entry name" value="STE3"/>
    <property type="match status" value="1"/>
</dbReference>
<dbReference type="PRINTS" id="PR00899">
    <property type="entry name" value="GPCRSTE3"/>
</dbReference>
<dbReference type="PRINTS" id="PR00901">
    <property type="entry name" value="PHEROMONEBAR"/>
</dbReference>
<sequence>MLDPTYPLFPTFAFLGFVLALVPLPWHLQAWNSGTCFFMVWTALGCLNQFVNSIVWKDNAINSAPIWCEISIRITMGLSVGLPASSLCIIRRLYHIAKVRAVSHTRAEKMRVIIIDALICVLFPLVYIAMQYIVQGHRFNILENVGCYPAVFNTPVTYVVSYIWPVLIGMVSATYSVLALIEFNRHRLQFSQFLHSNSTLSVSRYLRLMALAMTEMCCTVPLGIFVIVLNCTSTPIEPWVSLKATHYWYSRVDQYPAVVWRSSHLVVVCNELTRWLAPVSAMLFFAYFGFAQEARRNYAAAWAWACRALGLPERIATLPTTKSKGPGFAEKFAAKAKGLSSFNVKDFTSEFSSKAHDFTSKAKQYTLPRPMPQTPSSSGFSSSESTRFGSSVDGKELPSPTTKEFSSPIPIHLSGMQTLVSFDSNKDLPSPPAYDVEAQYGPYNIDNRVSYHIADAGVRASYPMGVAYSSDSEHRRINPHATFTSANNDTDEPTSPALPDTPSSCSSSATFSTLQSRDFIVLPSTTDVTRDTGSLPIRRSPAGPPRLPSLSQLFGISSMRAEGRDVEAQVQDVATGTAAPTTTAPAPASTTIAPATTTATAPTTTANIQRGEPDVPTSPRTHRASV</sequence>
<gene>
    <name type="primary">BAR3</name>
    <name type="ORF">SCHCODRAFT_258340</name>
</gene>
<comment type="function">
    <text>Receptor for the BAP3 pheromone, a prenylated mating factor.</text>
</comment>
<comment type="subcellular location">
    <subcellularLocation>
        <location>Membrane</location>
        <topology>Multi-pass membrane protein</topology>
    </subcellularLocation>
</comment>
<comment type="similarity">
    <text evidence="3">Belongs to the G-protein coupled receptor 4 family.</text>
</comment>
<keyword id="KW-0297">G-protein coupled receptor</keyword>
<keyword id="KW-0472">Membrane</keyword>
<keyword id="KW-0589">Pheromone response</keyword>
<keyword id="KW-0675">Receptor</keyword>
<keyword id="KW-1185">Reference proteome</keyword>
<keyword id="KW-0807">Transducer</keyword>
<keyword id="KW-0812">Transmembrane</keyword>
<keyword id="KW-1133">Transmembrane helix</keyword>
<proteinExistence type="inferred from homology"/>
<accession>P56502</accession>
<accession>D8QF48</accession>
<accession>O13589</accession>
<accession>Q6UDE6</accession>
<feature type="chain" id="PRO_0000195072" description="Pheromone B alpha 3 receptor">
    <location>
        <begin position="1"/>
        <end position="626"/>
    </location>
</feature>
<feature type="transmembrane region" description="Helical" evidence="1">
    <location>
        <begin position="8"/>
        <end position="28"/>
    </location>
</feature>
<feature type="transmembrane region" description="Helical" evidence="1">
    <location>
        <begin position="36"/>
        <end position="56"/>
    </location>
</feature>
<feature type="transmembrane region" description="Helical" evidence="1">
    <location>
        <begin position="70"/>
        <end position="90"/>
    </location>
</feature>
<feature type="transmembrane region" description="Helical" evidence="1">
    <location>
        <begin position="113"/>
        <end position="133"/>
    </location>
</feature>
<feature type="transmembrane region" description="Helical" evidence="1">
    <location>
        <begin position="163"/>
        <end position="183"/>
    </location>
</feature>
<feature type="transmembrane region" description="Helical" evidence="1">
    <location>
        <begin position="208"/>
        <end position="228"/>
    </location>
</feature>
<feature type="transmembrane region" description="Helical" evidence="1">
    <location>
        <begin position="271"/>
        <end position="291"/>
    </location>
</feature>
<feature type="region of interest" description="Disordered" evidence="2">
    <location>
        <begin position="363"/>
        <end position="409"/>
    </location>
</feature>
<feature type="region of interest" description="Disordered" evidence="2">
    <location>
        <begin position="481"/>
        <end position="509"/>
    </location>
</feature>
<feature type="region of interest" description="Disordered" evidence="2">
    <location>
        <begin position="524"/>
        <end position="549"/>
    </location>
</feature>
<feature type="region of interest" description="Disordered" evidence="2">
    <location>
        <begin position="571"/>
        <end position="626"/>
    </location>
</feature>
<feature type="compositionally biased region" description="Low complexity" evidence="2">
    <location>
        <begin position="376"/>
        <end position="391"/>
    </location>
</feature>
<feature type="compositionally biased region" description="Low complexity" evidence="2">
    <location>
        <begin position="574"/>
        <end position="606"/>
    </location>
</feature>
<feature type="sequence conflict" description="In Ref. 2; AAB61998." evidence="3" ref="2">
    <original>S</original>
    <variation>R</variation>
    <location>
        <position position="470"/>
    </location>
</feature>
<feature type="sequence conflict" description="In Ref. 1; AAR99648 and 2; AAB61998." evidence="3" ref="1 2">
    <original>E</original>
    <variation>V</variation>
    <location>
        <position position="473"/>
    </location>
</feature>
<feature type="sequence conflict" description="In Ref. 2; AAB61998." evidence="3" ref="2">
    <original>PTSPA</original>
    <variation>SDLPF</variation>
    <location>
        <begin position="493"/>
        <end position="497"/>
    </location>
</feature>
<feature type="sequence conflict" description="In Ref. 2; AAB61998." evidence="3" ref="2">
    <original>S</original>
    <variation>L</variation>
    <location>
        <position position="507"/>
    </location>
</feature>
<feature type="sequence conflict" description="In Ref. 2; AAB61998." evidence="3" ref="2">
    <original>A</original>
    <variation>P</variation>
    <location>
        <position position="586"/>
    </location>
</feature>
<feature type="sequence conflict" description="In Ref. 2; AAB61998." evidence="3" ref="2">
    <original>T</original>
    <variation>S</variation>
    <location>
        <position position="596"/>
    </location>
</feature>
<feature type="sequence conflict" description="In Ref. 2; AAB61998." evidence="3" ref="2">
    <original>A</original>
    <variation>S</variation>
    <location>
        <position position="601"/>
    </location>
</feature>
<feature type="sequence conflict" description="In Ref. 2; AAB61998." evidence="3" ref="2">
    <original>ANI</original>
    <variation>EY</variation>
    <location>
        <begin position="606"/>
        <end position="608"/>
    </location>
</feature>
<protein>
    <recommendedName>
        <fullName>Pheromone B alpha 3 receptor</fullName>
    </recommendedName>
</protein>
<evidence type="ECO:0000255" key="1"/>
<evidence type="ECO:0000256" key="2">
    <source>
        <dbReference type="SAM" id="MobiDB-lite"/>
    </source>
</evidence>
<evidence type="ECO:0000305" key="3"/>
<reference key="1">
    <citation type="journal article" date="2004" name="Fungal Genet. Biol.">
        <title>Crossing the boundary between the Balpha and Bbeta mating-type loci in Schizophyllum commune.</title>
        <authorList>
            <person name="Fowler T.J."/>
            <person name="Mitton M.F."/>
            <person name="Rees E.I."/>
            <person name="Raper C.A."/>
        </authorList>
    </citation>
    <scope>NUCLEOTIDE SEQUENCE [GENOMIC DNA]</scope>
    <source>
        <strain>H4-8 / FGSC 9210</strain>
    </source>
</reference>
<reference key="2">
    <citation type="submission" date="1997-07" db="EMBL/GenBank/DDBJ databases">
        <title>The determination of specificity in the Balpha receptors of Schizophyllum commune.</title>
        <authorList>
            <person name="Hegner J."/>
            <person name="Vaillancourt L.J."/>
            <person name="Raper C.A."/>
            <person name="Kothe E."/>
        </authorList>
    </citation>
    <scope>NUCLEOTIDE SEQUENCE [GENOMIC DNA]</scope>
    <source>
        <strain>H4-8 / FGSC 9210</strain>
    </source>
</reference>
<reference key="3">
    <citation type="journal article" date="2010" name="Nat. Biotechnol.">
        <title>Genome sequence of the model mushroom Schizophyllum commune.</title>
        <authorList>
            <person name="Ohm R.A."/>
            <person name="de Jong J.F."/>
            <person name="Lugones L.G."/>
            <person name="Aerts A."/>
            <person name="Kothe E."/>
            <person name="Stajich J.E."/>
            <person name="de Vries R.P."/>
            <person name="Record E."/>
            <person name="Levasseur A."/>
            <person name="Baker S.E."/>
            <person name="Bartholomew K.A."/>
            <person name="Coutinho P.M."/>
            <person name="Erdmann S."/>
            <person name="Fowler T.J."/>
            <person name="Gathman A.C."/>
            <person name="Lombard V."/>
            <person name="Henrissat B."/>
            <person name="Knabe N."/>
            <person name="Kuees U."/>
            <person name="Lilly W.W."/>
            <person name="Lindquist E."/>
            <person name="Lucas S."/>
            <person name="Magnuson J.K."/>
            <person name="Piumi F."/>
            <person name="Raudaskoski M."/>
            <person name="Salamov A."/>
            <person name="Schmutz J."/>
            <person name="Schwarze F.W.M.R."/>
            <person name="vanKuyk P.A."/>
            <person name="Horton J.S."/>
            <person name="Grigoriev I.V."/>
            <person name="Woesten H.A.B."/>
        </authorList>
    </citation>
    <scope>NUCLEOTIDE SEQUENCE [LARGE SCALE GENOMIC DNA]</scope>
    <source>
        <strain>H4-8 / FGSC 9210</strain>
    </source>
</reference>
<organism>
    <name type="scientific">Schizophyllum commune (strain H4-8 / FGSC 9210)</name>
    <name type="common">Split gill fungus</name>
    <dbReference type="NCBI Taxonomy" id="578458"/>
    <lineage>
        <taxon>Eukaryota</taxon>
        <taxon>Fungi</taxon>
        <taxon>Dikarya</taxon>
        <taxon>Basidiomycota</taxon>
        <taxon>Agaricomycotina</taxon>
        <taxon>Agaricomycetes</taxon>
        <taxon>Agaricomycetidae</taxon>
        <taxon>Agaricales</taxon>
        <taxon>Schizophyllaceae</taxon>
        <taxon>Schizophyllum</taxon>
    </lineage>
</organism>